<reference key="1">
    <citation type="journal article" date="2010" name="Stand. Genomic Sci.">
        <title>Complete genome sequence of Rhizobium leguminosarum bv trifolii strain WSM2304, an effective microsymbiont of the South American clover Trifolium polymorphum.</title>
        <authorList>
            <person name="Reeve W."/>
            <person name="O'Hara G."/>
            <person name="Chain P."/>
            <person name="Ardley J."/>
            <person name="Brau L."/>
            <person name="Nandesena K."/>
            <person name="Tiwari R."/>
            <person name="Malfatti S."/>
            <person name="Kiss H."/>
            <person name="Lapidus A."/>
            <person name="Copeland A."/>
            <person name="Nolan M."/>
            <person name="Land M."/>
            <person name="Ivanova N."/>
            <person name="Mavromatis K."/>
            <person name="Markowitz V."/>
            <person name="Kyrpides N."/>
            <person name="Melino V."/>
            <person name="Denton M."/>
            <person name="Yates R."/>
            <person name="Howieson J."/>
        </authorList>
    </citation>
    <scope>NUCLEOTIDE SEQUENCE [LARGE SCALE GENOMIC DNA]</scope>
    <source>
        <strain>WSM2304</strain>
    </source>
</reference>
<proteinExistence type="inferred from homology"/>
<keyword id="KW-0963">Cytoplasm</keyword>
<keyword id="KW-0238">DNA-binding</keyword>
<keyword id="KW-1185">Reference proteome</keyword>
<keyword id="KW-0677">Repeat</keyword>
<keyword id="KW-0804">Transcription</keyword>
<keyword id="KW-0805">Transcription regulation</keyword>
<dbReference type="EMBL" id="CP001191">
    <property type="protein sequence ID" value="ACI55874.1"/>
    <property type="molecule type" value="Genomic_DNA"/>
</dbReference>
<dbReference type="RefSeq" id="WP_012558375.1">
    <property type="nucleotide sequence ID" value="NC_011369.1"/>
</dbReference>
<dbReference type="SMR" id="B5ZWK3"/>
<dbReference type="STRING" id="395492.Rleg2_2603"/>
<dbReference type="KEGG" id="rlt:Rleg2_2603"/>
<dbReference type="eggNOG" id="COG2001">
    <property type="taxonomic scope" value="Bacteria"/>
</dbReference>
<dbReference type="HOGENOM" id="CLU_107907_1_0_5"/>
<dbReference type="Proteomes" id="UP000008330">
    <property type="component" value="Chromosome"/>
</dbReference>
<dbReference type="GO" id="GO:0005737">
    <property type="term" value="C:cytoplasm"/>
    <property type="evidence" value="ECO:0007669"/>
    <property type="project" value="UniProtKB-UniRule"/>
</dbReference>
<dbReference type="GO" id="GO:0009295">
    <property type="term" value="C:nucleoid"/>
    <property type="evidence" value="ECO:0007669"/>
    <property type="project" value="UniProtKB-SubCell"/>
</dbReference>
<dbReference type="GO" id="GO:0003700">
    <property type="term" value="F:DNA-binding transcription factor activity"/>
    <property type="evidence" value="ECO:0007669"/>
    <property type="project" value="UniProtKB-UniRule"/>
</dbReference>
<dbReference type="GO" id="GO:0000976">
    <property type="term" value="F:transcription cis-regulatory region binding"/>
    <property type="evidence" value="ECO:0007669"/>
    <property type="project" value="TreeGrafter"/>
</dbReference>
<dbReference type="GO" id="GO:2000143">
    <property type="term" value="P:negative regulation of DNA-templated transcription initiation"/>
    <property type="evidence" value="ECO:0007669"/>
    <property type="project" value="TreeGrafter"/>
</dbReference>
<dbReference type="CDD" id="cd16321">
    <property type="entry name" value="MraZ_C"/>
    <property type="match status" value="1"/>
</dbReference>
<dbReference type="CDD" id="cd16320">
    <property type="entry name" value="MraZ_N"/>
    <property type="match status" value="1"/>
</dbReference>
<dbReference type="Gene3D" id="3.40.1550.20">
    <property type="entry name" value="Transcriptional regulator MraZ domain"/>
    <property type="match status" value="1"/>
</dbReference>
<dbReference type="HAMAP" id="MF_01008">
    <property type="entry name" value="MraZ"/>
    <property type="match status" value="1"/>
</dbReference>
<dbReference type="InterPro" id="IPR003444">
    <property type="entry name" value="MraZ"/>
</dbReference>
<dbReference type="InterPro" id="IPR035644">
    <property type="entry name" value="MraZ_C"/>
</dbReference>
<dbReference type="InterPro" id="IPR020603">
    <property type="entry name" value="MraZ_dom"/>
</dbReference>
<dbReference type="InterPro" id="IPR035642">
    <property type="entry name" value="MraZ_N"/>
</dbReference>
<dbReference type="InterPro" id="IPR038619">
    <property type="entry name" value="MraZ_sf"/>
</dbReference>
<dbReference type="InterPro" id="IPR007159">
    <property type="entry name" value="SpoVT-AbrB_dom"/>
</dbReference>
<dbReference type="InterPro" id="IPR037914">
    <property type="entry name" value="SpoVT-AbrB_sf"/>
</dbReference>
<dbReference type="NCBIfam" id="NF001477">
    <property type="entry name" value="PRK00326.2-4"/>
    <property type="match status" value="1"/>
</dbReference>
<dbReference type="PANTHER" id="PTHR34701">
    <property type="entry name" value="TRANSCRIPTIONAL REGULATOR MRAZ"/>
    <property type="match status" value="1"/>
</dbReference>
<dbReference type="PANTHER" id="PTHR34701:SF1">
    <property type="entry name" value="TRANSCRIPTIONAL REGULATOR MRAZ"/>
    <property type="match status" value="1"/>
</dbReference>
<dbReference type="Pfam" id="PF02381">
    <property type="entry name" value="MraZ"/>
    <property type="match status" value="1"/>
</dbReference>
<dbReference type="SUPFAM" id="SSF89447">
    <property type="entry name" value="AbrB/MazE/MraZ-like"/>
    <property type="match status" value="1"/>
</dbReference>
<dbReference type="PROSITE" id="PS51740">
    <property type="entry name" value="SPOVT_ABRB"/>
    <property type="match status" value="2"/>
</dbReference>
<sequence length="145" mass="16126">MSRFLSNATNRIDAKGRVSVPSAFRSVLVQRNVQELYCFQDFVFPAISVGGPDLLERFERQIAAEDPFSPDANEMSLLIHGGGVFMKLDAEGRLMVTDFIRGFTGISDEVTFVGRADHFQLWQPQAFVAAQAQARGERKLAGKRS</sequence>
<name>MRAZ_RHILW</name>
<protein>
    <recommendedName>
        <fullName>Transcriptional regulator MraZ</fullName>
    </recommendedName>
</protein>
<evidence type="ECO:0000255" key="1">
    <source>
        <dbReference type="HAMAP-Rule" id="MF_01008"/>
    </source>
</evidence>
<evidence type="ECO:0000255" key="2">
    <source>
        <dbReference type="PROSITE-ProRule" id="PRU01076"/>
    </source>
</evidence>
<gene>
    <name evidence="1" type="primary">mraZ</name>
    <name type="ordered locus">Rleg2_2603</name>
</gene>
<feature type="chain" id="PRO_1000191325" description="Transcriptional regulator MraZ">
    <location>
        <begin position="1"/>
        <end position="145"/>
    </location>
</feature>
<feature type="domain" description="SpoVT-AbrB 1" evidence="2">
    <location>
        <begin position="7"/>
        <end position="54"/>
    </location>
</feature>
<feature type="domain" description="SpoVT-AbrB 2" evidence="2">
    <location>
        <begin position="83"/>
        <end position="126"/>
    </location>
</feature>
<accession>B5ZWK3</accession>
<organism>
    <name type="scientific">Rhizobium leguminosarum bv. trifolii (strain WSM2304)</name>
    <dbReference type="NCBI Taxonomy" id="395492"/>
    <lineage>
        <taxon>Bacteria</taxon>
        <taxon>Pseudomonadati</taxon>
        <taxon>Pseudomonadota</taxon>
        <taxon>Alphaproteobacteria</taxon>
        <taxon>Hyphomicrobiales</taxon>
        <taxon>Rhizobiaceae</taxon>
        <taxon>Rhizobium/Agrobacterium group</taxon>
        <taxon>Rhizobium</taxon>
    </lineage>
</organism>
<comment type="subunit">
    <text evidence="1">Forms oligomers.</text>
</comment>
<comment type="subcellular location">
    <subcellularLocation>
        <location evidence="1">Cytoplasm</location>
        <location evidence="1">Nucleoid</location>
    </subcellularLocation>
</comment>
<comment type="similarity">
    <text evidence="1">Belongs to the MraZ family.</text>
</comment>